<geneLocation type="chloroplast"/>
<protein>
    <recommendedName>
        <fullName>Uncharacterized protein ycf35</fullName>
    </recommendedName>
</protein>
<organism>
    <name type="scientific">Pyropia yezoensis</name>
    <name type="common">Susabi-nori</name>
    <name type="synonym">Porphyra yezoensis</name>
    <dbReference type="NCBI Taxonomy" id="2788"/>
    <lineage>
        <taxon>Eukaryota</taxon>
        <taxon>Rhodophyta</taxon>
        <taxon>Bangiophyceae</taxon>
        <taxon>Bangiales</taxon>
        <taxon>Bangiaceae</taxon>
        <taxon>Pyropia</taxon>
    </lineage>
</organism>
<feature type="chain" id="PRO_0000277274" description="Uncharacterized protein ycf35">
    <location>
        <begin position="1"/>
        <end position="128"/>
    </location>
</feature>
<gene>
    <name type="primary">ycf35</name>
</gene>
<name>YCF35_PYRYE</name>
<dbReference type="EMBL" id="AP006715">
    <property type="protein sequence ID" value="BAE92338.1"/>
    <property type="molecule type" value="Genomic_DNA"/>
</dbReference>
<dbReference type="RefSeq" id="YP_536895.1">
    <property type="nucleotide sequence ID" value="NC_007932.1"/>
</dbReference>
<dbReference type="GeneID" id="3978991"/>
<dbReference type="GO" id="GO:0009507">
    <property type="term" value="C:chloroplast"/>
    <property type="evidence" value="ECO:0007669"/>
    <property type="project" value="UniProtKB-SubCell"/>
</dbReference>
<dbReference type="InterPro" id="IPR009666">
    <property type="entry name" value="Uncharacterised_Ycf35"/>
</dbReference>
<dbReference type="PANTHER" id="PTHR39638">
    <property type="entry name" value="YCF35"/>
    <property type="match status" value="1"/>
</dbReference>
<dbReference type="PANTHER" id="PTHR39638:SF2">
    <property type="entry name" value="YCF35"/>
    <property type="match status" value="1"/>
</dbReference>
<dbReference type="Pfam" id="PF06868">
    <property type="entry name" value="DUF1257"/>
    <property type="match status" value="1"/>
</dbReference>
<evidence type="ECO:0000305" key="1"/>
<accession>Q1XDS3</accession>
<proteinExistence type="inferred from homology"/>
<reference key="1">
    <citation type="submission" date="2003-11" db="EMBL/GenBank/DDBJ databases">
        <title>Whole genome sequence of Porphyra yezoensis chloroplast.</title>
        <authorList>
            <person name="Kunimoto M."/>
            <person name="Morishima K."/>
            <person name="Yoshikawa M."/>
            <person name="Fukuda S."/>
            <person name="Kobayashi T."/>
            <person name="Kobayashi M."/>
            <person name="Okazaki T."/>
            <person name="Ohara I."/>
            <person name="Nakayama I."/>
        </authorList>
    </citation>
    <scope>NUCLEOTIDE SEQUENCE [LARGE SCALE GENOMIC DNA]</scope>
    <source>
        <strain>U-51</strain>
    </source>
</reference>
<comment type="subcellular location">
    <subcellularLocation>
        <location>Plastid</location>
        <location>Chloroplast</location>
    </subcellularLocation>
</comment>
<comment type="similarity">
    <text evidence="1">Belongs to the ycf35 family.</text>
</comment>
<sequence length="128" mass="15231">MSHFTKIQTTIQDLNLLKHALTDLGLIWQMNSSHIKVGENNQHKVDILIKQDNLSHIGFTWNDNRYHLVADLQLWEQPWSLEVFLDKLSQKYAYYSIIEETKKQGFEKMQQISQKDGSIKLIVQRWNY</sequence>
<keyword id="KW-0150">Chloroplast</keyword>
<keyword id="KW-0934">Plastid</keyword>